<feature type="chain" id="PRO_1000144098" description="Large ribosomal subunit protein uL13">
    <location>
        <begin position="1"/>
        <end position="154"/>
    </location>
</feature>
<gene>
    <name evidence="1" type="primary">rplM</name>
    <name type="ordered locus">BAbS19_I07590</name>
</gene>
<accession>B2S536</accession>
<protein>
    <recommendedName>
        <fullName evidence="1">Large ribosomal subunit protein uL13</fullName>
    </recommendedName>
    <alternativeName>
        <fullName evidence="2">50S ribosomal protein L13</fullName>
    </alternativeName>
</protein>
<organism>
    <name type="scientific">Brucella abortus (strain S19)</name>
    <dbReference type="NCBI Taxonomy" id="430066"/>
    <lineage>
        <taxon>Bacteria</taxon>
        <taxon>Pseudomonadati</taxon>
        <taxon>Pseudomonadota</taxon>
        <taxon>Alphaproteobacteria</taxon>
        <taxon>Hyphomicrobiales</taxon>
        <taxon>Brucellaceae</taxon>
        <taxon>Brucella/Ochrobactrum group</taxon>
        <taxon>Brucella</taxon>
    </lineage>
</organism>
<evidence type="ECO:0000255" key="1">
    <source>
        <dbReference type="HAMAP-Rule" id="MF_01366"/>
    </source>
</evidence>
<evidence type="ECO:0000305" key="2"/>
<reference key="1">
    <citation type="journal article" date="2008" name="PLoS ONE">
        <title>Genome sequence of Brucella abortus vaccine strain S19 compared to virulent strains yields candidate virulence genes.</title>
        <authorList>
            <person name="Crasta O.R."/>
            <person name="Folkerts O."/>
            <person name="Fei Z."/>
            <person name="Mane S.P."/>
            <person name="Evans C."/>
            <person name="Martino-Catt S."/>
            <person name="Bricker B."/>
            <person name="Yu G."/>
            <person name="Du L."/>
            <person name="Sobral B.W."/>
        </authorList>
    </citation>
    <scope>NUCLEOTIDE SEQUENCE [LARGE SCALE GENOMIC DNA]</scope>
    <source>
        <strain>S19</strain>
    </source>
</reference>
<keyword id="KW-0687">Ribonucleoprotein</keyword>
<keyword id="KW-0689">Ribosomal protein</keyword>
<dbReference type="EMBL" id="CP000887">
    <property type="protein sequence ID" value="ACD72283.1"/>
    <property type="molecule type" value="Genomic_DNA"/>
</dbReference>
<dbReference type="RefSeq" id="WP_002963926.1">
    <property type="nucleotide sequence ID" value="NC_010742.1"/>
</dbReference>
<dbReference type="SMR" id="B2S536"/>
<dbReference type="GeneID" id="93016820"/>
<dbReference type="KEGG" id="bmc:BAbS19_I07590"/>
<dbReference type="HOGENOM" id="CLU_082184_2_0_5"/>
<dbReference type="Proteomes" id="UP000002565">
    <property type="component" value="Chromosome 1"/>
</dbReference>
<dbReference type="GO" id="GO:0022625">
    <property type="term" value="C:cytosolic large ribosomal subunit"/>
    <property type="evidence" value="ECO:0007669"/>
    <property type="project" value="TreeGrafter"/>
</dbReference>
<dbReference type="GO" id="GO:0003729">
    <property type="term" value="F:mRNA binding"/>
    <property type="evidence" value="ECO:0007669"/>
    <property type="project" value="TreeGrafter"/>
</dbReference>
<dbReference type="GO" id="GO:0003735">
    <property type="term" value="F:structural constituent of ribosome"/>
    <property type="evidence" value="ECO:0007669"/>
    <property type="project" value="InterPro"/>
</dbReference>
<dbReference type="GO" id="GO:0017148">
    <property type="term" value="P:negative regulation of translation"/>
    <property type="evidence" value="ECO:0007669"/>
    <property type="project" value="TreeGrafter"/>
</dbReference>
<dbReference type="GO" id="GO:0006412">
    <property type="term" value="P:translation"/>
    <property type="evidence" value="ECO:0007669"/>
    <property type="project" value="UniProtKB-UniRule"/>
</dbReference>
<dbReference type="CDD" id="cd00392">
    <property type="entry name" value="Ribosomal_L13"/>
    <property type="match status" value="1"/>
</dbReference>
<dbReference type="FunFam" id="3.90.1180.10:FF:000001">
    <property type="entry name" value="50S ribosomal protein L13"/>
    <property type="match status" value="1"/>
</dbReference>
<dbReference type="Gene3D" id="3.90.1180.10">
    <property type="entry name" value="Ribosomal protein L13"/>
    <property type="match status" value="1"/>
</dbReference>
<dbReference type="HAMAP" id="MF_01366">
    <property type="entry name" value="Ribosomal_uL13"/>
    <property type="match status" value="1"/>
</dbReference>
<dbReference type="InterPro" id="IPR005822">
    <property type="entry name" value="Ribosomal_uL13"/>
</dbReference>
<dbReference type="InterPro" id="IPR005823">
    <property type="entry name" value="Ribosomal_uL13_bac-type"/>
</dbReference>
<dbReference type="InterPro" id="IPR036899">
    <property type="entry name" value="Ribosomal_uL13_sf"/>
</dbReference>
<dbReference type="NCBIfam" id="TIGR01066">
    <property type="entry name" value="rplM_bact"/>
    <property type="match status" value="1"/>
</dbReference>
<dbReference type="PANTHER" id="PTHR11545:SF2">
    <property type="entry name" value="LARGE RIBOSOMAL SUBUNIT PROTEIN UL13M"/>
    <property type="match status" value="1"/>
</dbReference>
<dbReference type="PANTHER" id="PTHR11545">
    <property type="entry name" value="RIBOSOMAL PROTEIN L13"/>
    <property type="match status" value="1"/>
</dbReference>
<dbReference type="Pfam" id="PF00572">
    <property type="entry name" value="Ribosomal_L13"/>
    <property type="match status" value="1"/>
</dbReference>
<dbReference type="PIRSF" id="PIRSF002181">
    <property type="entry name" value="Ribosomal_L13"/>
    <property type="match status" value="1"/>
</dbReference>
<dbReference type="SUPFAM" id="SSF52161">
    <property type="entry name" value="Ribosomal protein L13"/>
    <property type="match status" value="1"/>
</dbReference>
<comment type="function">
    <text evidence="1">This protein is one of the early assembly proteins of the 50S ribosomal subunit, although it is not seen to bind rRNA by itself. It is important during the early stages of 50S assembly.</text>
</comment>
<comment type="subunit">
    <text evidence="1">Part of the 50S ribosomal subunit.</text>
</comment>
<comment type="similarity">
    <text evidence="1">Belongs to the universal ribosomal protein uL13 family.</text>
</comment>
<proteinExistence type="inferred from homology"/>
<sequence length="154" mass="17301">MATFSQKPAEVVKKWVLIDAEGLVVGRLASLVANRLRGKHKATFTPHVDDGDNVIIINADKVVLTGKKYTDKKYYWHTGHPGGIKERTARQILEGRFPERVLEKAIERMIPRGPLGRRQMKNLRVNAGPNHQHEAQQPEVLDVAALNRKNKGNA</sequence>
<name>RL13_BRUA1</name>